<dbReference type="EMBL" id="D89066">
    <property type="protein sequence ID" value="BAA13755.1"/>
    <property type="molecule type" value="Genomic_DNA"/>
</dbReference>
<dbReference type="PIR" id="JC5607">
    <property type="entry name" value="JC5607"/>
</dbReference>
<dbReference type="RefSeq" id="WP_001290433.1">
    <property type="nucleotide sequence ID" value="NZ_WYDB01000001.1"/>
</dbReference>
<dbReference type="SMR" id="P68867"/>
<dbReference type="OMA" id="DFIHFYQ"/>
<dbReference type="GO" id="GO:0005737">
    <property type="term" value="C:cytoplasm"/>
    <property type="evidence" value="ECO:0007669"/>
    <property type="project" value="UniProtKB-SubCell"/>
</dbReference>
<dbReference type="GO" id="GO:0005886">
    <property type="term" value="C:plasma membrane"/>
    <property type="evidence" value="ECO:0007669"/>
    <property type="project" value="TreeGrafter"/>
</dbReference>
<dbReference type="GO" id="GO:0005524">
    <property type="term" value="F:ATP binding"/>
    <property type="evidence" value="ECO:0007669"/>
    <property type="project" value="UniProtKB-UniRule"/>
</dbReference>
<dbReference type="GO" id="GO:0016887">
    <property type="term" value="F:ATP hydrolysis activity"/>
    <property type="evidence" value="ECO:0007669"/>
    <property type="project" value="InterPro"/>
</dbReference>
<dbReference type="GO" id="GO:0003688">
    <property type="term" value="F:DNA replication origin binding"/>
    <property type="evidence" value="ECO:0007669"/>
    <property type="project" value="UniProtKB-UniRule"/>
</dbReference>
<dbReference type="GO" id="GO:0008289">
    <property type="term" value="F:lipid binding"/>
    <property type="evidence" value="ECO:0007669"/>
    <property type="project" value="UniProtKB-KW"/>
</dbReference>
<dbReference type="GO" id="GO:0006270">
    <property type="term" value="P:DNA replication initiation"/>
    <property type="evidence" value="ECO:0007669"/>
    <property type="project" value="UniProtKB-UniRule"/>
</dbReference>
<dbReference type="GO" id="GO:0006275">
    <property type="term" value="P:regulation of DNA replication"/>
    <property type="evidence" value="ECO:0007669"/>
    <property type="project" value="UniProtKB-UniRule"/>
</dbReference>
<dbReference type="CDD" id="cd00009">
    <property type="entry name" value="AAA"/>
    <property type="match status" value="1"/>
</dbReference>
<dbReference type="CDD" id="cd06571">
    <property type="entry name" value="Bac_DnaA_C"/>
    <property type="match status" value="1"/>
</dbReference>
<dbReference type="FunFam" id="1.10.1750.10:FF:000003">
    <property type="entry name" value="Chromosomal replication initiator protein DnaA"/>
    <property type="match status" value="1"/>
</dbReference>
<dbReference type="FunFam" id="1.10.8.60:FF:000003">
    <property type="entry name" value="Chromosomal replication initiator protein DnaA"/>
    <property type="match status" value="1"/>
</dbReference>
<dbReference type="FunFam" id="3.40.50.300:FF:000150">
    <property type="entry name" value="Chromosomal replication initiator protein DnaA"/>
    <property type="match status" value="1"/>
</dbReference>
<dbReference type="Gene3D" id="1.10.1750.10">
    <property type="match status" value="1"/>
</dbReference>
<dbReference type="Gene3D" id="1.10.8.60">
    <property type="match status" value="1"/>
</dbReference>
<dbReference type="Gene3D" id="3.30.300.180">
    <property type="match status" value="1"/>
</dbReference>
<dbReference type="Gene3D" id="3.40.50.300">
    <property type="entry name" value="P-loop containing nucleotide triphosphate hydrolases"/>
    <property type="match status" value="1"/>
</dbReference>
<dbReference type="HAMAP" id="MF_00377">
    <property type="entry name" value="DnaA_bact"/>
    <property type="match status" value="1"/>
</dbReference>
<dbReference type="InterPro" id="IPR003593">
    <property type="entry name" value="AAA+_ATPase"/>
</dbReference>
<dbReference type="InterPro" id="IPR001957">
    <property type="entry name" value="Chromosome_initiator_DnaA"/>
</dbReference>
<dbReference type="InterPro" id="IPR020591">
    <property type="entry name" value="Chromosome_initiator_DnaA-like"/>
</dbReference>
<dbReference type="InterPro" id="IPR018312">
    <property type="entry name" value="Chromosome_initiator_DnaA_CS"/>
</dbReference>
<dbReference type="InterPro" id="IPR013159">
    <property type="entry name" value="DnaA_C"/>
</dbReference>
<dbReference type="InterPro" id="IPR013317">
    <property type="entry name" value="DnaA_dom"/>
</dbReference>
<dbReference type="InterPro" id="IPR024633">
    <property type="entry name" value="DnaA_N_dom"/>
</dbReference>
<dbReference type="InterPro" id="IPR038454">
    <property type="entry name" value="DnaA_N_sf"/>
</dbReference>
<dbReference type="InterPro" id="IPR027417">
    <property type="entry name" value="P-loop_NTPase"/>
</dbReference>
<dbReference type="InterPro" id="IPR010921">
    <property type="entry name" value="Trp_repressor/repl_initiator"/>
</dbReference>
<dbReference type="NCBIfam" id="TIGR00362">
    <property type="entry name" value="DnaA"/>
    <property type="match status" value="1"/>
</dbReference>
<dbReference type="PANTHER" id="PTHR30050">
    <property type="entry name" value="CHROMOSOMAL REPLICATION INITIATOR PROTEIN DNAA"/>
    <property type="match status" value="1"/>
</dbReference>
<dbReference type="PANTHER" id="PTHR30050:SF2">
    <property type="entry name" value="CHROMOSOMAL REPLICATION INITIATOR PROTEIN DNAA"/>
    <property type="match status" value="1"/>
</dbReference>
<dbReference type="Pfam" id="PF00308">
    <property type="entry name" value="Bac_DnaA"/>
    <property type="match status" value="1"/>
</dbReference>
<dbReference type="Pfam" id="PF08299">
    <property type="entry name" value="Bac_DnaA_C"/>
    <property type="match status" value="1"/>
</dbReference>
<dbReference type="Pfam" id="PF11638">
    <property type="entry name" value="DnaA_N"/>
    <property type="match status" value="1"/>
</dbReference>
<dbReference type="PRINTS" id="PR00051">
    <property type="entry name" value="DNAA"/>
</dbReference>
<dbReference type="SMART" id="SM00382">
    <property type="entry name" value="AAA"/>
    <property type="match status" value="1"/>
</dbReference>
<dbReference type="SMART" id="SM00760">
    <property type="entry name" value="Bac_DnaA_C"/>
    <property type="match status" value="1"/>
</dbReference>
<dbReference type="SUPFAM" id="SSF52540">
    <property type="entry name" value="P-loop containing nucleoside triphosphate hydrolases"/>
    <property type="match status" value="1"/>
</dbReference>
<dbReference type="SUPFAM" id="SSF48295">
    <property type="entry name" value="TrpR-like"/>
    <property type="match status" value="1"/>
</dbReference>
<dbReference type="PROSITE" id="PS01008">
    <property type="entry name" value="DNAA"/>
    <property type="match status" value="1"/>
</dbReference>
<evidence type="ECO:0000255" key="1">
    <source>
        <dbReference type="HAMAP-Rule" id="MF_00377"/>
    </source>
</evidence>
<reference key="1">
    <citation type="journal article" date="1997" name="Biol. Pharm. Bull.">
        <title>Molecular cloning and sequence analysis of the dnaA gene of Staphylococcus aureus.</title>
        <authorList>
            <person name="Katayama H."/>
            <person name="Mizushima T."/>
            <person name="Miki T."/>
            <person name="Sekimizu K."/>
        </authorList>
    </citation>
    <scope>NUCLEOTIDE SEQUENCE [GENOMIC DNA]</scope>
</reference>
<reference key="2">
    <citation type="journal article" date="1995" name="Mol. Gen. Genet.">
        <title>Nucleotide sequence of the recF gene cluster from Staphylococcus aureus and complementation analysis in Bacillus subtilis recF mutants.</title>
        <authorList>
            <person name="Alonso J.C."/>
            <person name="Fisher L.M."/>
        </authorList>
    </citation>
    <scope>NUCLEOTIDE SEQUENCE [GENOMIC DNA] OF 346-453</scope>
    <source>
        <strain>YB866</strain>
    </source>
</reference>
<accession>P68867</accession>
<accession>P49994</accession>
<gene>
    <name evidence="1" type="primary">dnaA</name>
</gene>
<name>DNAA_STAAU</name>
<protein>
    <recommendedName>
        <fullName evidence="1">Chromosomal replication initiator protein DnaA</fullName>
    </recommendedName>
</protein>
<feature type="chain" id="PRO_0000114263" description="Chromosomal replication initiator protein DnaA">
    <location>
        <begin position="1"/>
        <end position="453"/>
    </location>
</feature>
<feature type="region of interest" description="Domain I, interacts with DnaA modulators" evidence="1">
    <location>
        <begin position="1"/>
        <end position="71"/>
    </location>
</feature>
<feature type="region of interest" description="Domain II" evidence="1">
    <location>
        <begin position="71"/>
        <end position="114"/>
    </location>
</feature>
<feature type="region of interest" description="Domain III, AAA+ region" evidence="1">
    <location>
        <begin position="115"/>
        <end position="331"/>
    </location>
</feature>
<feature type="region of interest" description="Domain IV, binds dsDNA" evidence="1">
    <location>
        <begin position="332"/>
        <end position="453"/>
    </location>
</feature>
<feature type="binding site" evidence="1">
    <location>
        <position position="159"/>
    </location>
    <ligand>
        <name>ATP</name>
        <dbReference type="ChEBI" id="CHEBI:30616"/>
    </ligand>
</feature>
<feature type="binding site" evidence="1">
    <location>
        <position position="161"/>
    </location>
    <ligand>
        <name>ATP</name>
        <dbReference type="ChEBI" id="CHEBI:30616"/>
    </ligand>
</feature>
<feature type="binding site" evidence="1">
    <location>
        <position position="162"/>
    </location>
    <ligand>
        <name>ATP</name>
        <dbReference type="ChEBI" id="CHEBI:30616"/>
    </ligand>
</feature>
<feature type="binding site" evidence="1">
    <location>
        <position position="163"/>
    </location>
    <ligand>
        <name>ATP</name>
        <dbReference type="ChEBI" id="CHEBI:30616"/>
    </ligand>
</feature>
<comment type="function">
    <text evidence="1">Plays an essential role in the initiation and regulation of chromosomal replication. ATP-DnaA binds to the origin of replication (oriC) to initiate formation of the DNA replication initiation complex once per cell cycle. Binds the DnaA box (a 9 base pair repeat at the origin) and separates the double-stranded (ds)DNA. Forms a right-handed helical filament on oriC DNA; dsDNA binds to the exterior of the filament while single-stranded (ss)DNA is stabiized in the filament's interior. The ATP-DnaA-oriC complex binds and stabilizes one strand of the AT-rich DNA unwinding element (DUE), permitting loading of DNA polymerase. After initiation quickly degrades to an ADP-DnaA complex that is not apt for DNA replication. Binds acidic phospholipids.</text>
</comment>
<comment type="subunit">
    <text evidence="1">Oligomerizes as a right-handed, spiral filament on DNA at oriC.</text>
</comment>
<comment type="subcellular location">
    <subcellularLocation>
        <location evidence="1">Cytoplasm</location>
    </subcellularLocation>
</comment>
<comment type="domain">
    <text evidence="1">Domain I is involved in oligomerization and binding regulators, domain II is flexibile and of varying length in different bacteria, domain III forms the AAA+ region, while domain IV binds dsDNA.</text>
</comment>
<comment type="similarity">
    <text evidence="1">Belongs to the DnaA family.</text>
</comment>
<keyword id="KW-0067">ATP-binding</keyword>
<keyword id="KW-0963">Cytoplasm</keyword>
<keyword id="KW-0235">DNA replication</keyword>
<keyword id="KW-0238">DNA-binding</keyword>
<keyword id="KW-0446">Lipid-binding</keyword>
<keyword id="KW-0547">Nucleotide-binding</keyword>
<proteinExistence type="inferred from homology"/>
<sequence length="453" mass="51966">MSEKEIWEKVLEIAQEKLSAVSYSTFLKDTELYTIKDGEAIVLSSIPFNANWLNQQYAEIIQAILFDVVGYEVKPHFITTEELANYSNNETATPKETTKPSTETTEDNHVLGREQFNAHNTFDTFVIGPGNRFPHAASLAVAEAPAKAYNPLFIYGGVGLGKTHLMHAIGHHVLDNNPDAKVIYTSSEKFTNEFIKSIRDNEGEAFRERYRNIDVLLIDDIQFIQNKVQTQEEFFYTFNELHQNNKQIVISSDRPPKEIAQLEDRLRSRFEWGLIVDITPPDYETRMAILQKKIEEEKLDIPPEALNYIANQIQSNIRELEGALTRLLAYSQLLGKPITTELTAEALKDIIQAPKSKKITIQDIQKIVGQYYNVRIEDFSAKKRTKSIAYPRQIAMYLSRELTDFSLPKIGEEFGGRDHTTVIHAHEKISKDLKEDPIFKQEVENLEKEIRNV</sequence>
<organism>
    <name type="scientific">Staphylococcus aureus</name>
    <dbReference type="NCBI Taxonomy" id="1280"/>
    <lineage>
        <taxon>Bacteria</taxon>
        <taxon>Bacillati</taxon>
        <taxon>Bacillota</taxon>
        <taxon>Bacilli</taxon>
        <taxon>Bacillales</taxon>
        <taxon>Staphylococcaceae</taxon>
        <taxon>Staphylococcus</taxon>
    </lineage>
</organism>